<accession>O27624</accession>
<evidence type="ECO:0000250" key="1"/>
<evidence type="ECO:0000305" key="2"/>
<organism>
    <name type="scientific">Methanothermobacter thermautotrophicus (strain ATCC 29096 / DSM 1053 / JCM 10044 / NBRC 100330 / Delta H)</name>
    <name type="common">Methanobacterium thermoautotrophicum</name>
    <dbReference type="NCBI Taxonomy" id="187420"/>
    <lineage>
        <taxon>Archaea</taxon>
        <taxon>Methanobacteriati</taxon>
        <taxon>Methanobacteriota</taxon>
        <taxon>Methanomada group</taxon>
        <taxon>Methanobacteria</taxon>
        <taxon>Methanobacteriales</taxon>
        <taxon>Methanobacteriaceae</taxon>
        <taxon>Methanothermobacter</taxon>
    </lineage>
</organism>
<protein>
    <recommendedName>
        <fullName>Histidinol-phosphate aminotransferase</fullName>
        <ecNumber>2.6.1.9</ecNumber>
    </recommendedName>
    <alternativeName>
        <fullName>Imidazole acetol-phosphate transaminase</fullName>
    </alternativeName>
</protein>
<keyword id="KW-0028">Amino-acid biosynthesis</keyword>
<keyword id="KW-0032">Aminotransferase</keyword>
<keyword id="KW-0368">Histidine biosynthesis</keyword>
<keyword id="KW-0663">Pyridoxal phosphate</keyword>
<keyword id="KW-1185">Reference proteome</keyword>
<keyword id="KW-0808">Transferase</keyword>
<feature type="chain" id="PRO_0000153501" description="Histidinol-phosphate aminotransferase">
    <location>
        <begin position="1"/>
        <end position="373"/>
    </location>
</feature>
<feature type="modified residue" description="N6-(pyridoxal phosphate)lysine" evidence="1">
    <location>
        <position position="229"/>
    </location>
</feature>
<reference key="1">
    <citation type="journal article" date="1997" name="J. Bacteriol.">
        <title>Complete genome sequence of Methanobacterium thermoautotrophicum deltaH: functional analysis and comparative genomics.</title>
        <authorList>
            <person name="Smith D.R."/>
            <person name="Doucette-Stamm L.A."/>
            <person name="Deloughery C."/>
            <person name="Lee H.-M."/>
            <person name="Dubois J."/>
            <person name="Aldredge T."/>
            <person name="Bashirzadeh R."/>
            <person name="Blakely D."/>
            <person name="Cook R."/>
            <person name="Gilbert K."/>
            <person name="Harrison D."/>
            <person name="Hoang L."/>
            <person name="Keagle P."/>
            <person name="Lumm W."/>
            <person name="Pothier B."/>
            <person name="Qiu D."/>
            <person name="Spadafora R."/>
            <person name="Vicare R."/>
            <person name="Wang Y."/>
            <person name="Wierzbowski J."/>
            <person name="Gibson R."/>
            <person name="Jiwani N."/>
            <person name="Caruso A."/>
            <person name="Bush D."/>
            <person name="Safer H."/>
            <person name="Patwell D."/>
            <person name="Prabhakar S."/>
            <person name="McDougall S."/>
            <person name="Shimer G."/>
            <person name="Goyal A."/>
            <person name="Pietrovski S."/>
            <person name="Church G.M."/>
            <person name="Daniels C.J."/>
            <person name="Mao J.-I."/>
            <person name="Rice P."/>
            <person name="Noelling J."/>
            <person name="Reeve J.N."/>
        </authorList>
    </citation>
    <scope>NUCLEOTIDE SEQUENCE [LARGE SCALE GENOMIC DNA]</scope>
    <source>
        <strain>ATCC 29096 / DSM 1053 / JCM 10044 / NBRC 100330 / Delta H</strain>
    </source>
</reference>
<gene>
    <name type="primary">hisC</name>
    <name type="ordered locus">MTH_1587</name>
</gene>
<dbReference type="EC" id="2.6.1.9"/>
<dbReference type="EMBL" id="AE000666">
    <property type="protein sequence ID" value="AAB86060.1"/>
    <property type="molecule type" value="Genomic_DNA"/>
</dbReference>
<dbReference type="PIR" id="G69078">
    <property type="entry name" value="G69078"/>
</dbReference>
<dbReference type="SMR" id="O27624"/>
<dbReference type="FunCoup" id="O27624">
    <property type="interactions" value="93"/>
</dbReference>
<dbReference type="STRING" id="187420.MTH_1587"/>
<dbReference type="PaxDb" id="187420-MTH_1587"/>
<dbReference type="EnsemblBacteria" id="AAB86060">
    <property type="protein sequence ID" value="AAB86060"/>
    <property type="gene ID" value="MTH_1587"/>
</dbReference>
<dbReference type="KEGG" id="mth:MTH_1587"/>
<dbReference type="PATRIC" id="fig|187420.15.peg.1550"/>
<dbReference type="HOGENOM" id="CLU_017584_3_3_2"/>
<dbReference type="InParanoid" id="O27624"/>
<dbReference type="UniPathway" id="UPA00031">
    <property type="reaction ID" value="UER00012"/>
</dbReference>
<dbReference type="Proteomes" id="UP000005223">
    <property type="component" value="Chromosome"/>
</dbReference>
<dbReference type="GO" id="GO:0004400">
    <property type="term" value="F:histidinol-phosphate transaminase activity"/>
    <property type="evidence" value="ECO:0007669"/>
    <property type="project" value="UniProtKB-UniRule"/>
</dbReference>
<dbReference type="GO" id="GO:0030170">
    <property type="term" value="F:pyridoxal phosphate binding"/>
    <property type="evidence" value="ECO:0007669"/>
    <property type="project" value="InterPro"/>
</dbReference>
<dbReference type="GO" id="GO:0000105">
    <property type="term" value="P:L-histidine biosynthetic process"/>
    <property type="evidence" value="ECO:0007669"/>
    <property type="project" value="UniProtKB-UniRule"/>
</dbReference>
<dbReference type="CDD" id="cd00609">
    <property type="entry name" value="AAT_like"/>
    <property type="match status" value="1"/>
</dbReference>
<dbReference type="Gene3D" id="3.90.1150.10">
    <property type="entry name" value="Aspartate Aminotransferase, domain 1"/>
    <property type="match status" value="1"/>
</dbReference>
<dbReference type="Gene3D" id="3.40.640.10">
    <property type="entry name" value="Type I PLP-dependent aspartate aminotransferase-like (Major domain)"/>
    <property type="match status" value="1"/>
</dbReference>
<dbReference type="HAMAP" id="MF_01023">
    <property type="entry name" value="HisC_aminotrans_2"/>
    <property type="match status" value="1"/>
</dbReference>
<dbReference type="InterPro" id="IPR004839">
    <property type="entry name" value="Aminotransferase_I/II_large"/>
</dbReference>
<dbReference type="InterPro" id="IPR005861">
    <property type="entry name" value="HisP_aminotrans"/>
</dbReference>
<dbReference type="InterPro" id="IPR015424">
    <property type="entry name" value="PyrdxlP-dep_Trfase"/>
</dbReference>
<dbReference type="InterPro" id="IPR015421">
    <property type="entry name" value="PyrdxlP-dep_Trfase_major"/>
</dbReference>
<dbReference type="InterPro" id="IPR015422">
    <property type="entry name" value="PyrdxlP-dep_Trfase_small"/>
</dbReference>
<dbReference type="NCBIfam" id="TIGR01141">
    <property type="entry name" value="hisC"/>
    <property type="match status" value="1"/>
</dbReference>
<dbReference type="PANTHER" id="PTHR42885:SF2">
    <property type="entry name" value="HISTIDINOL-PHOSPHATE AMINOTRANSFERASE"/>
    <property type="match status" value="1"/>
</dbReference>
<dbReference type="PANTHER" id="PTHR42885">
    <property type="entry name" value="HISTIDINOL-PHOSPHATE AMINOTRANSFERASE-RELATED"/>
    <property type="match status" value="1"/>
</dbReference>
<dbReference type="Pfam" id="PF00155">
    <property type="entry name" value="Aminotran_1_2"/>
    <property type="match status" value="1"/>
</dbReference>
<dbReference type="SUPFAM" id="SSF53383">
    <property type="entry name" value="PLP-dependent transferases"/>
    <property type="match status" value="1"/>
</dbReference>
<sequence length="373" mass="41918">MKLKSGSMVKIRNKINDIEPYVPGRSIKEIADAYGLKEDEIIKLGSNENPLGPSPAAVEAMERELESVHRYPESALTDLREAIADYAGVGMDQVIVGGDGADEIIDVLGRTFLEPGESFVVPMPSYMYYEYTLQAHDARAVHARWDVNENRLDLESVLDAVDESTRLVFLCTPNNPTGGLIDKKDIRAVLESTDTLVVVDEAYTEFAGVDNTDLLPDHENLFILRTFSKVMGLAGMRIGYGLGDPQIIEYMHRVKPVFSLTRLSHAAALATIRDRDYIKKSTEYSIKSREYLYSGLKKFPELRVFRSYANYILIDVRGTGRTAAELSEELLRKGIIVRDCTSFTGLDEYWIRVSVGTLEEDRRFLEVLGELVQ</sequence>
<name>HIS8_METTH</name>
<comment type="catalytic activity">
    <reaction>
        <text>L-histidinol phosphate + 2-oxoglutarate = 3-(imidazol-4-yl)-2-oxopropyl phosphate + L-glutamate</text>
        <dbReference type="Rhea" id="RHEA:23744"/>
        <dbReference type="ChEBI" id="CHEBI:16810"/>
        <dbReference type="ChEBI" id="CHEBI:29985"/>
        <dbReference type="ChEBI" id="CHEBI:57766"/>
        <dbReference type="ChEBI" id="CHEBI:57980"/>
        <dbReference type="EC" id="2.6.1.9"/>
    </reaction>
</comment>
<comment type="cofactor">
    <cofactor evidence="1">
        <name>pyridoxal 5'-phosphate</name>
        <dbReference type="ChEBI" id="CHEBI:597326"/>
    </cofactor>
</comment>
<comment type="pathway">
    <text>Amino-acid biosynthesis; L-histidine biosynthesis; L-histidine from 5-phospho-alpha-D-ribose 1-diphosphate: step 7/9.</text>
</comment>
<comment type="similarity">
    <text evidence="2">Belongs to the class-II pyridoxal-phosphate-dependent aminotransferase family. Histidinol-phosphate aminotransferase subfamily.</text>
</comment>
<proteinExistence type="inferred from homology"/>